<proteinExistence type="inferred from homology"/>
<sequence length="224" mass="23851">MNQKKAVILLSGGLDSATVVAMAKADGYACYTMSFDYGQRHRAELQAAERVARQLGAIEHKVIGLDLNGMGGSALTDDSIAVPEAPSQGIPVTYVPARNTVFLSLALGWAEVLEARDIFIGVNAVDYSGYPDCRPEFVEAFERMANLATKAGVEGNGFRIQAPLQYLSKAQIIQAGVARGVDYGLTVSCYQADDQGRACGKCDSCRLRADGFAAAGIPDPTPYF</sequence>
<feature type="chain" id="PRO_0000336932" description="7-cyano-7-deazaguanine synthase">
    <location>
        <begin position="1"/>
        <end position="224"/>
    </location>
</feature>
<feature type="binding site" evidence="1">
    <location>
        <begin position="10"/>
        <end position="20"/>
    </location>
    <ligand>
        <name>ATP</name>
        <dbReference type="ChEBI" id="CHEBI:30616"/>
    </ligand>
</feature>
<feature type="binding site" evidence="1">
    <location>
        <position position="189"/>
    </location>
    <ligand>
        <name>Zn(2+)</name>
        <dbReference type="ChEBI" id="CHEBI:29105"/>
    </ligand>
</feature>
<feature type="binding site" evidence="1">
    <location>
        <position position="199"/>
    </location>
    <ligand>
        <name>Zn(2+)</name>
        <dbReference type="ChEBI" id="CHEBI:29105"/>
    </ligand>
</feature>
<feature type="binding site" evidence="1">
    <location>
        <position position="202"/>
    </location>
    <ligand>
        <name>Zn(2+)</name>
        <dbReference type="ChEBI" id="CHEBI:29105"/>
    </ligand>
</feature>
<feature type="binding site" evidence="1">
    <location>
        <position position="205"/>
    </location>
    <ligand>
        <name>Zn(2+)</name>
        <dbReference type="ChEBI" id="CHEBI:29105"/>
    </ligand>
</feature>
<gene>
    <name evidence="1" type="primary">queC</name>
    <name type="ordered locus">PSPA7_4532</name>
</gene>
<dbReference type="EC" id="6.3.4.20" evidence="1"/>
<dbReference type="EMBL" id="CP000744">
    <property type="protein sequence ID" value="ABR82811.1"/>
    <property type="molecule type" value="Genomic_DNA"/>
</dbReference>
<dbReference type="RefSeq" id="WP_012076888.1">
    <property type="nucleotide sequence ID" value="NC_009656.1"/>
</dbReference>
<dbReference type="SMR" id="A6V9Z6"/>
<dbReference type="GeneID" id="77222441"/>
<dbReference type="KEGG" id="pap:PSPA7_4532"/>
<dbReference type="HOGENOM" id="CLU_081854_1_1_6"/>
<dbReference type="UniPathway" id="UPA00391"/>
<dbReference type="Proteomes" id="UP000001582">
    <property type="component" value="Chromosome"/>
</dbReference>
<dbReference type="GO" id="GO:0005524">
    <property type="term" value="F:ATP binding"/>
    <property type="evidence" value="ECO:0007669"/>
    <property type="project" value="UniProtKB-UniRule"/>
</dbReference>
<dbReference type="GO" id="GO:0016879">
    <property type="term" value="F:ligase activity, forming carbon-nitrogen bonds"/>
    <property type="evidence" value="ECO:0007669"/>
    <property type="project" value="UniProtKB-UniRule"/>
</dbReference>
<dbReference type="GO" id="GO:0008270">
    <property type="term" value="F:zinc ion binding"/>
    <property type="evidence" value="ECO:0007669"/>
    <property type="project" value="UniProtKB-UniRule"/>
</dbReference>
<dbReference type="GO" id="GO:0008616">
    <property type="term" value="P:queuosine biosynthetic process"/>
    <property type="evidence" value="ECO:0007669"/>
    <property type="project" value="UniProtKB-UniRule"/>
</dbReference>
<dbReference type="CDD" id="cd01995">
    <property type="entry name" value="QueC-like"/>
    <property type="match status" value="1"/>
</dbReference>
<dbReference type="FunFam" id="3.40.50.620:FF:000131">
    <property type="entry name" value="7-cyano-7-deazaguanine synthase"/>
    <property type="match status" value="1"/>
</dbReference>
<dbReference type="Gene3D" id="3.40.50.620">
    <property type="entry name" value="HUPs"/>
    <property type="match status" value="1"/>
</dbReference>
<dbReference type="HAMAP" id="MF_01633">
    <property type="entry name" value="QueC"/>
    <property type="match status" value="1"/>
</dbReference>
<dbReference type="InterPro" id="IPR018317">
    <property type="entry name" value="QueC"/>
</dbReference>
<dbReference type="InterPro" id="IPR014729">
    <property type="entry name" value="Rossmann-like_a/b/a_fold"/>
</dbReference>
<dbReference type="NCBIfam" id="TIGR00364">
    <property type="entry name" value="7-cyano-7-deazaguanine synthase QueC"/>
    <property type="match status" value="1"/>
</dbReference>
<dbReference type="PANTHER" id="PTHR42914">
    <property type="entry name" value="7-CYANO-7-DEAZAGUANINE SYNTHASE"/>
    <property type="match status" value="1"/>
</dbReference>
<dbReference type="PANTHER" id="PTHR42914:SF1">
    <property type="entry name" value="7-CYANO-7-DEAZAGUANINE SYNTHASE"/>
    <property type="match status" value="1"/>
</dbReference>
<dbReference type="Pfam" id="PF06508">
    <property type="entry name" value="QueC"/>
    <property type="match status" value="1"/>
</dbReference>
<dbReference type="PIRSF" id="PIRSF006293">
    <property type="entry name" value="ExsB"/>
    <property type="match status" value="1"/>
</dbReference>
<dbReference type="SUPFAM" id="SSF52402">
    <property type="entry name" value="Adenine nucleotide alpha hydrolases-like"/>
    <property type="match status" value="1"/>
</dbReference>
<accession>A6V9Z6</accession>
<name>QUEC_PSEP7</name>
<protein>
    <recommendedName>
        <fullName evidence="1">7-cyano-7-deazaguanine synthase</fullName>
        <ecNumber evidence="1">6.3.4.20</ecNumber>
    </recommendedName>
    <alternativeName>
        <fullName evidence="1">7-cyano-7-carbaguanine synthase</fullName>
    </alternativeName>
    <alternativeName>
        <fullName evidence="1">PreQ(0) synthase</fullName>
    </alternativeName>
    <alternativeName>
        <fullName evidence="1">Queuosine biosynthesis protein QueC</fullName>
    </alternativeName>
</protein>
<reference key="1">
    <citation type="submission" date="2007-06" db="EMBL/GenBank/DDBJ databases">
        <authorList>
            <person name="Dodson R.J."/>
            <person name="Harkins D."/>
            <person name="Paulsen I.T."/>
        </authorList>
    </citation>
    <scope>NUCLEOTIDE SEQUENCE [LARGE SCALE GENOMIC DNA]</scope>
    <source>
        <strain>DSM 24068 / PA7</strain>
    </source>
</reference>
<comment type="function">
    <text evidence="1">Catalyzes the ATP-dependent conversion of 7-carboxy-7-deazaguanine (CDG) to 7-cyano-7-deazaguanine (preQ(0)).</text>
</comment>
<comment type="catalytic activity">
    <reaction evidence="1">
        <text>7-carboxy-7-deazaguanine + NH4(+) + ATP = 7-cyano-7-deazaguanine + ADP + phosphate + H2O + H(+)</text>
        <dbReference type="Rhea" id="RHEA:27982"/>
        <dbReference type="ChEBI" id="CHEBI:15377"/>
        <dbReference type="ChEBI" id="CHEBI:15378"/>
        <dbReference type="ChEBI" id="CHEBI:28938"/>
        <dbReference type="ChEBI" id="CHEBI:30616"/>
        <dbReference type="ChEBI" id="CHEBI:43474"/>
        <dbReference type="ChEBI" id="CHEBI:45075"/>
        <dbReference type="ChEBI" id="CHEBI:61036"/>
        <dbReference type="ChEBI" id="CHEBI:456216"/>
        <dbReference type="EC" id="6.3.4.20"/>
    </reaction>
</comment>
<comment type="cofactor">
    <cofactor evidence="1">
        <name>Zn(2+)</name>
        <dbReference type="ChEBI" id="CHEBI:29105"/>
    </cofactor>
    <text evidence="1">Binds 1 zinc ion per subunit.</text>
</comment>
<comment type="pathway">
    <text evidence="1">Purine metabolism; 7-cyano-7-deazaguanine biosynthesis.</text>
</comment>
<comment type="similarity">
    <text evidence="1">Belongs to the QueC family.</text>
</comment>
<organism>
    <name type="scientific">Pseudomonas paraeruginosa (strain DSM 24068 / PA7)</name>
    <name type="common">Pseudomonas aeruginosa (strain PA7)</name>
    <dbReference type="NCBI Taxonomy" id="381754"/>
    <lineage>
        <taxon>Bacteria</taxon>
        <taxon>Pseudomonadati</taxon>
        <taxon>Pseudomonadota</taxon>
        <taxon>Gammaproteobacteria</taxon>
        <taxon>Pseudomonadales</taxon>
        <taxon>Pseudomonadaceae</taxon>
        <taxon>Pseudomonas</taxon>
        <taxon>Pseudomonas paraeruginosa</taxon>
    </lineage>
</organism>
<evidence type="ECO:0000255" key="1">
    <source>
        <dbReference type="HAMAP-Rule" id="MF_01633"/>
    </source>
</evidence>
<keyword id="KW-0067">ATP-binding</keyword>
<keyword id="KW-0436">Ligase</keyword>
<keyword id="KW-0479">Metal-binding</keyword>
<keyword id="KW-0547">Nucleotide-binding</keyword>
<keyword id="KW-0671">Queuosine biosynthesis</keyword>
<keyword id="KW-0862">Zinc</keyword>